<keyword id="KW-0067">ATP-binding</keyword>
<keyword id="KW-0319">Glycerol metabolism</keyword>
<keyword id="KW-0418">Kinase</keyword>
<keyword id="KW-0547">Nucleotide-binding</keyword>
<keyword id="KW-1185">Reference proteome</keyword>
<keyword id="KW-0808">Transferase</keyword>
<gene>
    <name evidence="1" type="primary">glpK</name>
    <name type="ordered locus">BBta_7067</name>
</gene>
<name>GLPK_BRASB</name>
<evidence type="ECO:0000255" key="1">
    <source>
        <dbReference type="HAMAP-Rule" id="MF_00186"/>
    </source>
</evidence>
<proteinExistence type="inferred from homology"/>
<dbReference type="EC" id="2.7.1.30" evidence="1"/>
<dbReference type="EMBL" id="CP000494">
    <property type="protein sequence ID" value="ABQ38950.1"/>
    <property type="molecule type" value="Genomic_DNA"/>
</dbReference>
<dbReference type="RefSeq" id="WP_012046879.1">
    <property type="nucleotide sequence ID" value="NC_009485.1"/>
</dbReference>
<dbReference type="SMR" id="A5ES06"/>
<dbReference type="STRING" id="288000.BBta_7067"/>
<dbReference type="KEGG" id="bbt:BBta_7067"/>
<dbReference type="eggNOG" id="COG0554">
    <property type="taxonomic scope" value="Bacteria"/>
</dbReference>
<dbReference type="HOGENOM" id="CLU_009281_2_3_5"/>
<dbReference type="OrthoDB" id="9805576at2"/>
<dbReference type="UniPathway" id="UPA00618">
    <property type="reaction ID" value="UER00672"/>
</dbReference>
<dbReference type="Proteomes" id="UP000000246">
    <property type="component" value="Chromosome"/>
</dbReference>
<dbReference type="GO" id="GO:0005829">
    <property type="term" value="C:cytosol"/>
    <property type="evidence" value="ECO:0007669"/>
    <property type="project" value="TreeGrafter"/>
</dbReference>
<dbReference type="GO" id="GO:0005524">
    <property type="term" value="F:ATP binding"/>
    <property type="evidence" value="ECO:0007669"/>
    <property type="project" value="UniProtKB-UniRule"/>
</dbReference>
<dbReference type="GO" id="GO:0004370">
    <property type="term" value="F:glycerol kinase activity"/>
    <property type="evidence" value="ECO:0000250"/>
    <property type="project" value="UniProtKB"/>
</dbReference>
<dbReference type="GO" id="GO:0019563">
    <property type="term" value="P:glycerol catabolic process"/>
    <property type="evidence" value="ECO:0007669"/>
    <property type="project" value="UniProtKB-UniRule"/>
</dbReference>
<dbReference type="GO" id="GO:0006071">
    <property type="term" value="P:glycerol metabolic process"/>
    <property type="evidence" value="ECO:0000250"/>
    <property type="project" value="UniProtKB"/>
</dbReference>
<dbReference type="GO" id="GO:0006072">
    <property type="term" value="P:glycerol-3-phosphate metabolic process"/>
    <property type="evidence" value="ECO:0007669"/>
    <property type="project" value="InterPro"/>
</dbReference>
<dbReference type="CDD" id="cd07786">
    <property type="entry name" value="FGGY_EcGK_like"/>
    <property type="match status" value="1"/>
</dbReference>
<dbReference type="FunFam" id="3.30.420.40:FF:000007">
    <property type="entry name" value="Glycerol kinase"/>
    <property type="match status" value="1"/>
</dbReference>
<dbReference type="FunFam" id="3.30.420.40:FF:000008">
    <property type="entry name" value="Glycerol kinase"/>
    <property type="match status" value="1"/>
</dbReference>
<dbReference type="Gene3D" id="3.30.420.40">
    <property type="match status" value="2"/>
</dbReference>
<dbReference type="HAMAP" id="MF_00186">
    <property type="entry name" value="Glycerol_kin"/>
    <property type="match status" value="1"/>
</dbReference>
<dbReference type="InterPro" id="IPR043129">
    <property type="entry name" value="ATPase_NBD"/>
</dbReference>
<dbReference type="InterPro" id="IPR000577">
    <property type="entry name" value="Carb_kinase_FGGY"/>
</dbReference>
<dbReference type="InterPro" id="IPR018483">
    <property type="entry name" value="Carb_kinase_FGGY_CS"/>
</dbReference>
<dbReference type="InterPro" id="IPR018485">
    <property type="entry name" value="FGGY_C"/>
</dbReference>
<dbReference type="InterPro" id="IPR018484">
    <property type="entry name" value="FGGY_N"/>
</dbReference>
<dbReference type="InterPro" id="IPR005999">
    <property type="entry name" value="Glycerol_kin"/>
</dbReference>
<dbReference type="NCBIfam" id="TIGR01311">
    <property type="entry name" value="glycerol_kin"/>
    <property type="match status" value="1"/>
</dbReference>
<dbReference type="NCBIfam" id="NF000756">
    <property type="entry name" value="PRK00047.1"/>
    <property type="match status" value="1"/>
</dbReference>
<dbReference type="PANTHER" id="PTHR10196:SF78">
    <property type="entry name" value="GLYCEROL KINASE"/>
    <property type="match status" value="1"/>
</dbReference>
<dbReference type="PANTHER" id="PTHR10196">
    <property type="entry name" value="SUGAR KINASE"/>
    <property type="match status" value="1"/>
</dbReference>
<dbReference type="Pfam" id="PF02782">
    <property type="entry name" value="FGGY_C"/>
    <property type="match status" value="1"/>
</dbReference>
<dbReference type="Pfam" id="PF00370">
    <property type="entry name" value="FGGY_N"/>
    <property type="match status" value="1"/>
</dbReference>
<dbReference type="PIRSF" id="PIRSF000538">
    <property type="entry name" value="GlpK"/>
    <property type="match status" value="1"/>
</dbReference>
<dbReference type="SUPFAM" id="SSF53067">
    <property type="entry name" value="Actin-like ATPase domain"/>
    <property type="match status" value="2"/>
</dbReference>
<dbReference type="PROSITE" id="PS00933">
    <property type="entry name" value="FGGY_KINASES_1"/>
    <property type="match status" value="1"/>
</dbReference>
<dbReference type="PROSITE" id="PS00445">
    <property type="entry name" value="FGGY_KINASES_2"/>
    <property type="match status" value="1"/>
</dbReference>
<organism>
    <name type="scientific">Bradyrhizobium sp. (strain BTAi1 / ATCC BAA-1182)</name>
    <dbReference type="NCBI Taxonomy" id="288000"/>
    <lineage>
        <taxon>Bacteria</taxon>
        <taxon>Pseudomonadati</taxon>
        <taxon>Pseudomonadota</taxon>
        <taxon>Alphaproteobacteria</taxon>
        <taxon>Hyphomicrobiales</taxon>
        <taxon>Nitrobacteraceae</taxon>
        <taxon>Bradyrhizobium</taxon>
    </lineage>
</organism>
<reference key="1">
    <citation type="journal article" date="2007" name="Science">
        <title>Legumes symbioses: absence of nod genes in photosynthetic bradyrhizobia.</title>
        <authorList>
            <person name="Giraud E."/>
            <person name="Moulin L."/>
            <person name="Vallenet D."/>
            <person name="Barbe V."/>
            <person name="Cytryn E."/>
            <person name="Avarre J.-C."/>
            <person name="Jaubert M."/>
            <person name="Simon D."/>
            <person name="Cartieaux F."/>
            <person name="Prin Y."/>
            <person name="Bena G."/>
            <person name="Hannibal L."/>
            <person name="Fardoux J."/>
            <person name="Kojadinovic M."/>
            <person name="Vuillet L."/>
            <person name="Lajus A."/>
            <person name="Cruveiller S."/>
            <person name="Rouy Z."/>
            <person name="Mangenot S."/>
            <person name="Segurens B."/>
            <person name="Dossat C."/>
            <person name="Franck W.L."/>
            <person name="Chang W.-S."/>
            <person name="Saunders E."/>
            <person name="Bruce D."/>
            <person name="Richardson P."/>
            <person name="Normand P."/>
            <person name="Dreyfus B."/>
            <person name="Pignol D."/>
            <person name="Stacey G."/>
            <person name="Emerich D."/>
            <person name="Vermeglio A."/>
            <person name="Medigue C."/>
            <person name="Sadowsky M."/>
        </authorList>
    </citation>
    <scope>NUCLEOTIDE SEQUENCE [LARGE SCALE GENOMIC DNA]</scope>
    <source>
        <strain>BTAi1 / ATCC BAA-1182</strain>
    </source>
</reference>
<sequence length="500" mass="54125">MSFVLAIDQGTTSSRAIVFRSDISIAAVAQQEFPQHFPASGWVEHEPEDIWTSTVMTCRDALDKAGIKAKDIAAIGITNQRETTVVWDRATGQAVHRAIVWQDRRTADICAKLKADGYEPDVSAKTGLIIDPYFSGTKVAWILDHVPGARERAERGELLFGTVDCYLLWRLTGGRVHATDATNASRTLLFNIHTGQWDDTLLKLLRVPRSMLPEVKDSSAEFGTTTPDLFGGPIKVSGIAGDQQAATIGQACFTPGMMKSTYGTGCFALLNTGATPVKSNNKLLTTIAYQLGGVRTYALEGSIFVAGSAVQWLRDGLGIIKHAAETGPLADKSDSMQSVYLVPAFVGLGAPYWNPRVRGALFGLTRNTGPAELAHATLESVCYQTYDLWAAMRADWPDASAATIVLRVDGGMTASDWTMQRLADLLDAPVDRPMIQETTALGAAYLAGLNAGVYPEPEKFADNWRLEHRFKPAMSAATRQRKLAGWARAVKGVLASDEGE</sequence>
<protein>
    <recommendedName>
        <fullName evidence="1">Glycerol kinase</fullName>
        <ecNumber evidence="1">2.7.1.30</ecNumber>
    </recommendedName>
    <alternativeName>
        <fullName evidence="1">ATP:glycerol 3-phosphotransferase</fullName>
    </alternativeName>
    <alternativeName>
        <fullName evidence="1">Glycerokinase</fullName>
        <shortName evidence="1">GK</shortName>
    </alternativeName>
</protein>
<comment type="function">
    <text evidence="1">Key enzyme in the regulation of glycerol uptake and metabolism. Catalyzes the phosphorylation of glycerol to yield sn-glycerol 3-phosphate.</text>
</comment>
<comment type="catalytic activity">
    <reaction evidence="1">
        <text>glycerol + ATP = sn-glycerol 3-phosphate + ADP + H(+)</text>
        <dbReference type="Rhea" id="RHEA:21644"/>
        <dbReference type="ChEBI" id="CHEBI:15378"/>
        <dbReference type="ChEBI" id="CHEBI:17754"/>
        <dbReference type="ChEBI" id="CHEBI:30616"/>
        <dbReference type="ChEBI" id="CHEBI:57597"/>
        <dbReference type="ChEBI" id="CHEBI:456216"/>
        <dbReference type="EC" id="2.7.1.30"/>
    </reaction>
</comment>
<comment type="activity regulation">
    <text evidence="1">Inhibited by fructose 1,6-bisphosphate (FBP).</text>
</comment>
<comment type="pathway">
    <text evidence="1">Polyol metabolism; glycerol degradation via glycerol kinase pathway; sn-glycerol 3-phosphate from glycerol: step 1/1.</text>
</comment>
<comment type="similarity">
    <text evidence="1">Belongs to the FGGY kinase family.</text>
</comment>
<feature type="chain" id="PRO_1000020706" description="Glycerol kinase">
    <location>
        <begin position="1"/>
        <end position="500"/>
    </location>
</feature>
<feature type="binding site" evidence="1">
    <location>
        <position position="11"/>
    </location>
    <ligand>
        <name>ADP</name>
        <dbReference type="ChEBI" id="CHEBI:456216"/>
    </ligand>
</feature>
<feature type="binding site" evidence="1">
    <location>
        <position position="11"/>
    </location>
    <ligand>
        <name>ATP</name>
        <dbReference type="ChEBI" id="CHEBI:30616"/>
    </ligand>
</feature>
<feature type="binding site" evidence="1">
    <location>
        <position position="11"/>
    </location>
    <ligand>
        <name>sn-glycerol 3-phosphate</name>
        <dbReference type="ChEBI" id="CHEBI:57597"/>
    </ligand>
</feature>
<feature type="binding site" evidence="1">
    <location>
        <position position="12"/>
    </location>
    <ligand>
        <name>ATP</name>
        <dbReference type="ChEBI" id="CHEBI:30616"/>
    </ligand>
</feature>
<feature type="binding site" evidence="1">
    <location>
        <position position="13"/>
    </location>
    <ligand>
        <name>ATP</name>
        <dbReference type="ChEBI" id="CHEBI:30616"/>
    </ligand>
</feature>
<feature type="binding site" evidence="1">
    <location>
        <position position="15"/>
    </location>
    <ligand>
        <name>ADP</name>
        <dbReference type="ChEBI" id="CHEBI:456216"/>
    </ligand>
</feature>
<feature type="binding site" evidence="1">
    <location>
        <position position="81"/>
    </location>
    <ligand>
        <name>glycerol</name>
        <dbReference type="ChEBI" id="CHEBI:17754"/>
    </ligand>
</feature>
<feature type="binding site" evidence="1">
    <location>
        <position position="81"/>
    </location>
    <ligand>
        <name>sn-glycerol 3-phosphate</name>
        <dbReference type="ChEBI" id="CHEBI:57597"/>
    </ligand>
</feature>
<feature type="binding site" evidence="1">
    <location>
        <position position="82"/>
    </location>
    <ligand>
        <name>glycerol</name>
        <dbReference type="ChEBI" id="CHEBI:17754"/>
    </ligand>
</feature>
<feature type="binding site" evidence="1">
    <location>
        <position position="82"/>
    </location>
    <ligand>
        <name>sn-glycerol 3-phosphate</name>
        <dbReference type="ChEBI" id="CHEBI:57597"/>
    </ligand>
</feature>
<feature type="binding site" evidence="1">
    <location>
        <position position="133"/>
    </location>
    <ligand>
        <name>glycerol</name>
        <dbReference type="ChEBI" id="CHEBI:17754"/>
    </ligand>
</feature>
<feature type="binding site" evidence="1">
    <location>
        <position position="133"/>
    </location>
    <ligand>
        <name>sn-glycerol 3-phosphate</name>
        <dbReference type="ChEBI" id="CHEBI:57597"/>
    </ligand>
</feature>
<feature type="binding site" evidence="1">
    <location>
        <position position="242"/>
    </location>
    <ligand>
        <name>glycerol</name>
        <dbReference type="ChEBI" id="CHEBI:17754"/>
    </ligand>
</feature>
<feature type="binding site" evidence="1">
    <location>
        <position position="242"/>
    </location>
    <ligand>
        <name>sn-glycerol 3-phosphate</name>
        <dbReference type="ChEBI" id="CHEBI:57597"/>
    </ligand>
</feature>
<feature type="binding site" evidence="1">
    <location>
        <position position="243"/>
    </location>
    <ligand>
        <name>glycerol</name>
        <dbReference type="ChEBI" id="CHEBI:17754"/>
    </ligand>
</feature>
<feature type="binding site" evidence="1">
    <location>
        <position position="264"/>
    </location>
    <ligand>
        <name>ADP</name>
        <dbReference type="ChEBI" id="CHEBI:456216"/>
    </ligand>
</feature>
<feature type="binding site" evidence="1">
    <location>
        <position position="264"/>
    </location>
    <ligand>
        <name>ATP</name>
        <dbReference type="ChEBI" id="CHEBI:30616"/>
    </ligand>
</feature>
<feature type="binding site" evidence="1">
    <location>
        <position position="307"/>
    </location>
    <ligand>
        <name>ADP</name>
        <dbReference type="ChEBI" id="CHEBI:456216"/>
    </ligand>
</feature>
<feature type="binding site" evidence="1">
    <location>
        <position position="307"/>
    </location>
    <ligand>
        <name>ATP</name>
        <dbReference type="ChEBI" id="CHEBI:30616"/>
    </ligand>
</feature>
<feature type="binding site" evidence="1">
    <location>
        <position position="311"/>
    </location>
    <ligand>
        <name>ATP</name>
        <dbReference type="ChEBI" id="CHEBI:30616"/>
    </ligand>
</feature>
<feature type="binding site" evidence="1">
    <location>
        <position position="411"/>
    </location>
    <ligand>
        <name>ADP</name>
        <dbReference type="ChEBI" id="CHEBI:456216"/>
    </ligand>
</feature>
<feature type="binding site" evidence="1">
    <location>
        <position position="411"/>
    </location>
    <ligand>
        <name>ATP</name>
        <dbReference type="ChEBI" id="CHEBI:30616"/>
    </ligand>
</feature>
<accession>A5ES06</accession>